<comment type="catalytic activity">
    <reaction evidence="1">
        <text>agmatine + H2O = urea + putrescine</text>
        <dbReference type="Rhea" id="RHEA:13929"/>
        <dbReference type="ChEBI" id="CHEBI:15377"/>
        <dbReference type="ChEBI" id="CHEBI:16199"/>
        <dbReference type="ChEBI" id="CHEBI:58145"/>
        <dbReference type="ChEBI" id="CHEBI:326268"/>
        <dbReference type="EC" id="3.5.3.11"/>
    </reaction>
</comment>
<comment type="cofactor">
    <cofactor evidence="3">
        <name>Mn(2+)</name>
        <dbReference type="ChEBI" id="CHEBI:29035"/>
    </cofactor>
</comment>
<comment type="similarity">
    <text evidence="3">Belongs to the arginase family.</text>
</comment>
<protein>
    <recommendedName>
        <fullName>Putative agmatinase 3</fullName>
        <ecNumber evidence="1">3.5.3.11</ecNumber>
    </recommendedName>
    <alternativeName>
        <fullName>Agmatine ureohydrolase 3</fullName>
        <shortName>AUH 3</shortName>
    </alternativeName>
</protein>
<sequence>MKSVEWFTWGVFLLLSGFGEAGRMGLGFQEKNPVFVKEKQSPFYAVPSNYEEVEFSSIVEPMYSGIATFGRLENVECLSKRSEDFDIAFIGMPFDTGTSYRPGARFGPSSLREGSRRINTKYGAVNVPLEINPFKSWAKLVDCGDIPVTTYDILKAMDQLESAYFQLIARKPSSFTDHDGFAKNDTVLPRVLSLGGDHTIVLPILRALHRVYGQPISVIHFDSHLDTWAPGLIGDGDEADGINHGSYFYFASQEGIMSKDANIHAGIRTPISSFSDYDDDVDCGFKIIEAREIDDLGIDGIVKKIRDRVGDNLVYLSIDIDVLDPAFAPATGTPETGGWSSREMRAILRGLQGLKFVGADLVEVAPAYDVAEITSLAGAQLLFDIVSMMVKYPLVKEADLSRYMPIHK</sequence>
<feature type="signal peptide" evidence="2">
    <location>
        <begin position="1"/>
        <end position="21"/>
    </location>
</feature>
<feature type="chain" id="PRO_0000311760" description="Putative agmatinase 3">
    <location>
        <begin position="22"/>
        <end position="408"/>
    </location>
</feature>
<feature type="binding site" evidence="3">
    <location>
        <position position="198"/>
    </location>
    <ligand>
        <name>Mn(2+)</name>
        <dbReference type="ChEBI" id="CHEBI:29035"/>
        <label>1</label>
    </ligand>
</feature>
<feature type="binding site" evidence="3">
    <location>
        <position position="222"/>
    </location>
    <ligand>
        <name>Mn(2+)</name>
        <dbReference type="ChEBI" id="CHEBI:29035"/>
        <label>1</label>
    </ligand>
</feature>
<feature type="binding site" evidence="3">
    <location>
        <position position="222"/>
    </location>
    <ligand>
        <name>Mn(2+)</name>
        <dbReference type="ChEBI" id="CHEBI:29035"/>
        <label>2</label>
    </ligand>
</feature>
<feature type="binding site" evidence="3">
    <location>
        <position position="224"/>
    </location>
    <ligand>
        <name>Mn(2+)</name>
        <dbReference type="ChEBI" id="CHEBI:29035"/>
        <label>2</label>
    </ligand>
</feature>
<feature type="binding site" evidence="3">
    <location>
        <position position="226"/>
    </location>
    <ligand>
        <name>Mn(2+)</name>
        <dbReference type="ChEBI" id="CHEBI:29035"/>
        <label>1</label>
    </ligand>
</feature>
<feature type="binding site" evidence="3">
    <location>
        <position position="319"/>
    </location>
    <ligand>
        <name>Mn(2+)</name>
        <dbReference type="ChEBI" id="CHEBI:29035"/>
        <label>1</label>
    </ligand>
</feature>
<feature type="binding site" evidence="3">
    <location>
        <position position="319"/>
    </location>
    <ligand>
        <name>Mn(2+)</name>
        <dbReference type="ChEBI" id="CHEBI:29035"/>
        <label>2</label>
    </ligand>
</feature>
<feature type="binding site" evidence="3">
    <location>
        <position position="321"/>
    </location>
    <ligand>
        <name>Mn(2+)</name>
        <dbReference type="ChEBI" id="CHEBI:29035"/>
        <label>2</label>
    </ligand>
</feature>
<name>SPEB3_SCHPO</name>
<gene>
    <name type="ORF">SPAPB24D3.03</name>
</gene>
<organism>
    <name type="scientific">Schizosaccharomyces pombe (strain 972 / ATCC 24843)</name>
    <name type="common">Fission yeast</name>
    <dbReference type="NCBI Taxonomy" id="284812"/>
    <lineage>
        <taxon>Eukaryota</taxon>
        <taxon>Fungi</taxon>
        <taxon>Dikarya</taxon>
        <taxon>Ascomycota</taxon>
        <taxon>Taphrinomycotina</taxon>
        <taxon>Schizosaccharomycetes</taxon>
        <taxon>Schizosaccharomycetales</taxon>
        <taxon>Schizosaccharomycetaceae</taxon>
        <taxon>Schizosaccharomyces</taxon>
    </lineage>
</organism>
<evidence type="ECO:0000250" key="1">
    <source>
        <dbReference type="UniProtKB" id="Q9BSE5"/>
    </source>
</evidence>
<evidence type="ECO:0000255" key="2"/>
<evidence type="ECO:0000255" key="3">
    <source>
        <dbReference type="PROSITE-ProRule" id="PRU00742"/>
    </source>
</evidence>
<reference key="1">
    <citation type="journal article" date="2002" name="Nature">
        <title>The genome sequence of Schizosaccharomyces pombe.</title>
        <authorList>
            <person name="Wood V."/>
            <person name="Gwilliam R."/>
            <person name="Rajandream M.A."/>
            <person name="Lyne M.H."/>
            <person name="Lyne R."/>
            <person name="Stewart A."/>
            <person name="Sgouros J.G."/>
            <person name="Peat N."/>
            <person name="Hayles J."/>
            <person name="Baker S.G."/>
            <person name="Basham D."/>
            <person name="Bowman S."/>
            <person name="Brooks K."/>
            <person name="Brown D."/>
            <person name="Brown S."/>
            <person name="Chillingworth T."/>
            <person name="Churcher C.M."/>
            <person name="Collins M."/>
            <person name="Connor R."/>
            <person name="Cronin A."/>
            <person name="Davis P."/>
            <person name="Feltwell T."/>
            <person name="Fraser A."/>
            <person name="Gentles S."/>
            <person name="Goble A."/>
            <person name="Hamlin N."/>
            <person name="Harris D.E."/>
            <person name="Hidalgo J."/>
            <person name="Hodgson G."/>
            <person name="Holroyd S."/>
            <person name="Hornsby T."/>
            <person name="Howarth S."/>
            <person name="Huckle E.J."/>
            <person name="Hunt S."/>
            <person name="Jagels K."/>
            <person name="James K.D."/>
            <person name="Jones L."/>
            <person name="Jones M."/>
            <person name="Leather S."/>
            <person name="McDonald S."/>
            <person name="McLean J."/>
            <person name="Mooney P."/>
            <person name="Moule S."/>
            <person name="Mungall K.L."/>
            <person name="Murphy L.D."/>
            <person name="Niblett D."/>
            <person name="Odell C."/>
            <person name="Oliver K."/>
            <person name="O'Neil S."/>
            <person name="Pearson D."/>
            <person name="Quail M.A."/>
            <person name="Rabbinowitsch E."/>
            <person name="Rutherford K.M."/>
            <person name="Rutter S."/>
            <person name="Saunders D."/>
            <person name="Seeger K."/>
            <person name="Sharp S."/>
            <person name="Skelton J."/>
            <person name="Simmonds M.N."/>
            <person name="Squares R."/>
            <person name="Squares S."/>
            <person name="Stevens K."/>
            <person name="Taylor K."/>
            <person name="Taylor R.G."/>
            <person name="Tivey A."/>
            <person name="Walsh S.V."/>
            <person name="Warren T."/>
            <person name="Whitehead S."/>
            <person name="Woodward J.R."/>
            <person name="Volckaert G."/>
            <person name="Aert R."/>
            <person name="Robben J."/>
            <person name="Grymonprez B."/>
            <person name="Weltjens I."/>
            <person name="Vanstreels E."/>
            <person name="Rieger M."/>
            <person name="Schaefer M."/>
            <person name="Mueller-Auer S."/>
            <person name="Gabel C."/>
            <person name="Fuchs M."/>
            <person name="Duesterhoeft A."/>
            <person name="Fritzc C."/>
            <person name="Holzer E."/>
            <person name="Moestl D."/>
            <person name="Hilbert H."/>
            <person name="Borzym K."/>
            <person name="Langer I."/>
            <person name="Beck A."/>
            <person name="Lehrach H."/>
            <person name="Reinhardt R."/>
            <person name="Pohl T.M."/>
            <person name="Eger P."/>
            <person name="Zimmermann W."/>
            <person name="Wedler H."/>
            <person name="Wambutt R."/>
            <person name="Purnelle B."/>
            <person name="Goffeau A."/>
            <person name="Cadieu E."/>
            <person name="Dreano S."/>
            <person name="Gloux S."/>
            <person name="Lelaure V."/>
            <person name="Mottier S."/>
            <person name="Galibert F."/>
            <person name="Aves S.J."/>
            <person name="Xiang Z."/>
            <person name="Hunt C."/>
            <person name="Moore K."/>
            <person name="Hurst S.M."/>
            <person name="Lucas M."/>
            <person name="Rochet M."/>
            <person name="Gaillardin C."/>
            <person name="Tallada V.A."/>
            <person name="Garzon A."/>
            <person name="Thode G."/>
            <person name="Daga R.R."/>
            <person name="Cruzado L."/>
            <person name="Jimenez J."/>
            <person name="Sanchez M."/>
            <person name="del Rey F."/>
            <person name="Benito J."/>
            <person name="Dominguez A."/>
            <person name="Revuelta J.L."/>
            <person name="Moreno S."/>
            <person name="Armstrong J."/>
            <person name="Forsburg S.L."/>
            <person name="Cerutti L."/>
            <person name="Lowe T."/>
            <person name="McCombie W.R."/>
            <person name="Paulsen I."/>
            <person name="Potashkin J."/>
            <person name="Shpakovski G.V."/>
            <person name="Ussery D."/>
            <person name="Barrell B.G."/>
            <person name="Nurse P."/>
        </authorList>
    </citation>
    <scope>NUCLEOTIDE SEQUENCE [LARGE SCALE GENOMIC DNA]</scope>
    <source>
        <strain>972 / ATCC 24843</strain>
    </source>
</reference>
<reference key="2">
    <citation type="journal article" date="2011" name="Science">
        <title>Comparative functional genomics of the fission yeasts.</title>
        <authorList>
            <person name="Rhind N."/>
            <person name="Chen Z."/>
            <person name="Yassour M."/>
            <person name="Thompson D.A."/>
            <person name="Haas B.J."/>
            <person name="Habib N."/>
            <person name="Wapinski I."/>
            <person name="Roy S."/>
            <person name="Lin M.F."/>
            <person name="Heiman D.I."/>
            <person name="Young S.K."/>
            <person name="Furuya K."/>
            <person name="Guo Y."/>
            <person name="Pidoux A."/>
            <person name="Chen H.M."/>
            <person name="Robbertse B."/>
            <person name="Goldberg J.M."/>
            <person name="Aoki K."/>
            <person name="Bayne E.H."/>
            <person name="Berlin A.M."/>
            <person name="Desjardins C.A."/>
            <person name="Dobbs E."/>
            <person name="Dukaj L."/>
            <person name="Fan L."/>
            <person name="FitzGerald M.G."/>
            <person name="French C."/>
            <person name="Gujja S."/>
            <person name="Hansen K."/>
            <person name="Keifenheim D."/>
            <person name="Levin J.Z."/>
            <person name="Mosher R.A."/>
            <person name="Mueller C.A."/>
            <person name="Pfiffner J."/>
            <person name="Priest M."/>
            <person name="Russ C."/>
            <person name="Smialowska A."/>
            <person name="Swoboda P."/>
            <person name="Sykes S.M."/>
            <person name="Vaughn M."/>
            <person name="Vengrova S."/>
            <person name="Yoder R."/>
            <person name="Zeng Q."/>
            <person name="Allshire R."/>
            <person name="Baulcombe D."/>
            <person name="Birren B.W."/>
            <person name="Brown W."/>
            <person name="Ekwall K."/>
            <person name="Kellis M."/>
            <person name="Leatherwood J."/>
            <person name="Levin H."/>
            <person name="Margalit H."/>
            <person name="Martienssen R."/>
            <person name="Nieduszynski C.A."/>
            <person name="Spatafora J.W."/>
            <person name="Friedman N."/>
            <person name="Dalgaard J.Z."/>
            <person name="Baumann P."/>
            <person name="Niki H."/>
            <person name="Regev A."/>
            <person name="Nusbaum C."/>
        </authorList>
    </citation>
    <scope>REVISION OF GENE MODEL</scope>
</reference>
<dbReference type="EC" id="3.5.3.11" evidence="1"/>
<dbReference type="EMBL" id="CU329670">
    <property type="protein sequence ID" value="CAC36899.2"/>
    <property type="molecule type" value="Genomic_DNA"/>
</dbReference>
<dbReference type="RefSeq" id="NP_593990.2">
    <property type="nucleotide sequence ID" value="NM_001019416.2"/>
</dbReference>
<dbReference type="SMR" id="Q9C0Y9"/>
<dbReference type="BioGRID" id="279984">
    <property type="interactions" value="6"/>
</dbReference>
<dbReference type="FunCoup" id="Q9C0Y9">
    <property type="interactions" value="34"/>
</dbReference>
<dbReference type="STRING" id="284812.Q9C0Y9"/>
<dbReference type="iPTMnet" id="Q9C0Y9"/>
<dbReference type="PaxDb" id="4896-SPAPB24D3.03.1"/>
<dbReference type="EnsemblFungi" id="SPAPB24D3.03.1">
    <property type="protein sequence ID" value="SPAPB24D3.03.1:pep"/>
    <property type="gene ID" value="SPAPB24D3.03"/>
</dbReference>
<dbReference type="KEGG" id="spo:2543569"/>
<dbReference type="PomBase" id="SPAPB24D3.03"/>
<dbReference type="VEuPathDB" id="FungiDB:SPAPB24D3.03"/>
<dbReference type="eggNOG" id="KOG2964">
    <property type="taxonomic scope" value="Eukaryota"/>
</dbReference>
<dbReference type="HOGENOM" id="CLU_039478_1_1_1"/>
<dbReference type="InParanoid" id="Q9C0Y9"/>
<dbReference type="OMA" id="YHIPNAM"/>
<dbReference type="PRO" id="PR:Q9C0Y9"/>
<dbReference type="Proteomes" id="UP000002485">
    <property type="component" value="Chromosome I"/>
</dbReference>
<dbReference type="GO" id="GO:0008783">
    <property type="term" value="F:agmatinase activity"/>
    <property type="evidence" value="ECO:0000318"/>
    <property type="project" value="GO_Central"/>
</dbReference>
<dbReference type="GO" id="GO:0046872">
    <property type="term" value="F:metal ion binding"/>
    <property type="evidence" value="ECO:0007669"/>
    <property type="project" value="UniProtKB-KW"/>
</dbReference>
<dbReference type="GO" id="GO:0033389">
    <property type="term" value="P:putrescine biosynthetic process from arginine, via agmatine"/>
    <property type="evidence" value="ECO:0000318"/>
    <property type="project" value="GO_Central"/>
</dbReference>
<dbReference type="GO" id="GO:0019627">
    <property type="term" value="P:urea metabolic process"/>
    <property type="evidence" value="ECO:0000305"/>
    <property type="project" value="PomBase"/>
</dbReference>
<dbReference type="CDD" id="cd11592">
    <property type="entry name" value="Agmatinase_PAH"/>
    <property type="match status" value="1"/>
</dbReference>
<dbReference type="FunFam" id="3.40.800.10:FF:000006">
    <property type="entry name" value="Agmatinase 1"/>
    <property type="match status" value="1"/>
</dbReference>
<dbReference type="Gene3D" id="3.40.800.10">
    <property type="entry name" value="Ureohydrolase domain"/>
    <property type="match status" value="1"/>
</dbReference>
<dbReference type="InterPro" id="IPR006035">
    <property type="entry name" value="Ureohydrolase"/>
</dbReference>
<dbReference type="InterPro" id="IPR023696">
    <property type="entry name" value="Ureohydrolase_dom_sf"/>
</dbReference>
<dbReference type="InterPro" id="IPR020855">
    <property type="entry name" value="Ureohydrolase_Mn_BS"/>
</dbReference>
<dbReference type="PANTHER" id="PTHR11358:SF30">
    <property type="entry name" value="AGMATINASE 1-RELATED"/>
    <property type="match status" value="1"/>
</dbReference>
<dbReference type="PANTHER" id="PTHR11358">
    <property type="entry name" value="ARGINASE/AGMATINASE"/>
    <property type="match status" value="1"/>
</dbReference>
<dbReference type="Pfam" id="PF00491">
    <property type="entry name" value="Arginase"/>
    <property type="match status" value="1"/>
</dbReference>
<dbReference type="PIRSF" id="PIRSF036979">
    <property type="entry name" value="Arginase"/>
    <property type="match status" value="1"/>
</dbReference>
<dbReference type="PRINTS" id="PR00116">
    <property type="entry name" value="ARGINASE"/>
</dbReference>
<dbReference type="SUPFAM" id="SSF52768">
    <property type="entry name" value="Arginase/deacetylase"/>
    <property type="match status" value="1"/>
</dbReference>
<dbReference type="PROSITE" id="PS01053">
    <property type="entry name" value="ARGINASE_1"/>
    <property type="match status" value="1"/>
</dbReference>
<dbReference type="PROSITE" id="PS51409">
    <property type="entry name" value="ARGINASE_2"/>
    <property type="match status" value="1"/>
</dbReference>
<keyword id="KW-0378">Hydrolase</keyword>
<keyword id="KW-0464">Manganese</keyword>
<keyword id="KW-0479">Metal-binding</keyword>
<keyword id="KW-1185">Reference proteome</keyword>
<keyword id="KW-0732">Signal</keyword>
<accession>Q9C0Y9</accession>
<proteinExistence type="inferred from homology"/>